<keyword id="KW-0131">Cell cycle</keyword>
<keyword id="KW-0132">Cell division</keyword>
<keyword id="KW-0342">GTP-binding</keyword>
<keyword id="KW-0460">Magnesium</keyword>
<keyword id="KW-0479">Metal-binding</keyword>
<keyword id="KW-0547">Nucleotide-binding</keyword>
<keyword id="KW-0717">Septation</keyword>
<sequence length="217" mass="23666">MPETEKPLFGHPWIFIRGVPSLTFLPPEGPSEVAFAGRSNVGKSSLINALVGQKGLARTSNTPGRTQELNYFVPDGYSGEGGDLPPMAIVDMPGYGYAQAPKEQVDKWTKLVFDYLRGRATLKRVYVLIDSRHGIKKNDEDVLTLLDKAAVSYQLVLTKTDKIKAPAVPKLLAETADKIRKRPAAYPAVLSTSSEKGDGLDDLRQAIAQTVGIANWE</sequence>
<accession>B3Q039</accession>
<proteinExistence type="inferred from homology"/>
<evidence type="ECO:0000255" key="1">
    <source>
        <dbReference type="HAMAP-Rule" id="MF_00321"/>
    </source>
</evidence>
<comment type="function">
    <text evidence="1">Necessary for normal cell division and for the maintenance of normal septation.</text>
</comment>
<comment type="cofactor">
    <cofactor evidence="1">
        <name>Mg(2+)</name>
        <dbReference type="ChEBI" id="CHEBI:18420"/>
    </cofactor>
</comment>
<comment type="similarity">
    <text evidence="1">Belongs to the TRAFAC class TrmE-Era-EngA-EngB-Septin-like GTPase superfamily. EngB GTPase family.</text>
</comment>
<gene>
    <name evidence="1" type="primary">engB</name>
    <name type="ordered locus">RHECIAT_CH0000477</name>
</gene>
<reference key="1">
    <citation type="journal article" date="2010" name="Appl. Environ. Microbiol.">
        <title>Conserved symbiotic plasmid DNA sequences in the multireplicon pangenomic structure of Rhizobium etli.</title>
        <authorList>
            <person name="Gonzalez V."/>
            <person name="Acosta J.L."/>
            <person name="Santamaria R.I."/>
            <person name="Bustos P."/>
            <person name="Fernandez J.L."/>
            <person name="Hernandez Gonzalez I.L."/>
            <person name="Diaz R."/>
            <person name="Flores M."/>
            <person name="Palacios R."/>
            <person name="Mora J."/>
            <person name="Davila G."/>
        </authorList>
    </citation>
    <scope>NUCLEOTIDE SEQUENCE [LARGE SCALE GENOMIC DNA]</scope>
    <source>
        <strain>CIAT 652</strain>
    </source>
</reference>
<feature type="chain" id="PRO_1000115997" description="Probable GTP-binding protein EngB">
    <location>
        <begin position="1"/>
        <end position="217"/>
    </location>
</feature>
<feature type="domain" description="EngB-type G" evidence="1">
    <location>
        <begin position="29"/>
        <end position="213"/>
    </location>
</feature>
<feature type="binding site" evidence="1">
    <location>
        <begin position="37"/>
        <end position="44"/>
    </location>
    <ligand>
        <name>GTP</name>
        <dbReference type="ChEBI" id="CHEBI:37565"/>
    </ligand>
</feature>
<feature type="binding site" evidence="1">
    <location>
        <position position="44"/>
    </location>
    <ligand>
        <name>Mg(2+)</name>
        <dbReference type="ChEBI" id="CHEBI:18420"/>
    </ligand>
</feature>
<feature type="binding site" evidence="1">
    <location>
        <begin position="64"/>
        <end position="68"/>
    </location>
    <ligand>
        <name>GTP</name>
        <dbReference type="ChEBI" id="CHEBI:37565"/>
    </ligand>
</feature>
<feature type="binding site" evidence="1">
    <location>
        <position position="66"/>
    </location>
    <ligand>
        <name>Mg(2+)</name>
        <dbReference type="ChEBI" id="CHEBI:18420"/>
    </ligand>
</feature>
<feature type="binding site" evidence="1">
    <location>
        <begin position="91"/>
        <end position="94"/>
    </location>
    <ligand>
        <name>GTP</name>
        <dbReference type="ChEBI" id="CHEBI:37565"/>
    </ligand>
</feature>
<feature type="binding site" evidence="1">
    <location>
        <begin position="158"/>
        <end position="161"/>
    </location>
    <ligand>
        <name>GTP</name>
        <dbReference type="ChEBI" id="CHEBI:37565"/>
    </ligand>
</feature>
<feature type="binding site" evidence="1">
    <location>
        <begin position="192"/>
        <end position="194"/>
    </location>
    <ligand>
        <name>GTP</name>
        <dbReference type="ChEBI" id="CHEBI:37565"/>
    </ligand>
</feature>
<organism>
    <name type="scientific">Rhizobium etli (strain CIAT 652)</name>
    <dbReference type="NCBI Taxonomy" id="491916"/>
    <lineage>
        <taxon>Bacteria</taxon>
        <taxon>Pseudomonadati</taxon>
        <taxon>Pseudomonadota</taxon>
        <taxon>Alphaproteobacteria</taxon>
        <taxon>Hyphomicrobiales</taxon>
        <taxon>Rhizobiaceae</taxon>
        <taxon>Rhizobium/Agrobacterium group</taxon>
        <taxon>Rhizobium</taxon>
    </lineage>
</organism>
<dbReference type="EMBL" id="CP001074">
    <property type="protein sequence ID" value="ACE89471.1"/>
    <property type="molecule type" value="Genomic_DNA"/>
</dbReference>
<dbReference type="SMR" id="B3Q039"/>
<dbReference type="KEGG" id="rec:RHECIAT_CH0000477"/>
<dbReference type="eggNOG" id="COG0218">
    <property type="taxonomic scope" value="Bacteria"/>
</dbReference>
<dbReference type="HOGENOM" id="CLU_033732_2_0_5"/>
<dbReference type="Proteomes" id="UP000008817">
    <property type="component" value="Chromosome"/>
</dbReference>
<dbReference type="GO" id="GO:0005829">
    <property type="term" value="C:cytosol"/>
    <property type="evidence" value="ECO:0007669"/>
    <property type="project" value="TreeGrafter"/>
</dbReference>
<dbReference type="GO" id="GO:0005525">
    <property type="term" value="F:GTP binding"/>
    <property type="evidence" value="ECO:0007669"/>
    <property type="project" value="UniProtKB-UniRule"/>
</dbReference>
<dbReference type="GO" id="GO:0046872">
    <property type="term" value="F:metal ion binding"/>
    <property type="evidence" value="ECO:0007669"/>
    <property type="project" value="UniProtKB-KW"/>
</dbReference>
<dbReference type="GO" id="GO:0000917">
    <property type="term" value="P:division septum assembly"/>
    <property type="evidence" value="ECO:0007669"/>
    <property type="project" value="UniProtKB-KW"/>
</dbReference>
<dbReference type="CDD" id="cd01876">
    <property type="entry name" value="YihA_EngB"/>
    <property type="match status" value="1"/>
</dbReference>
<dbReference type="Gene3D" id="3.40.50.300">
    <property type="entry name" value="P-loop containing nucleotide triphosphate hydrolases"/>
    <property type="match status" value="1"/>
</dbReference>
<dbReference type="HAMAP" id="MF_00321">
    <property type="entry name" value="GTPase_EngB"/>
    <property type="match status" value="1"/>
</dbReference>
<dbReference type="InterPro" id="IPR030393">
    <property type="entry name" value="G_ENGB_dom"/>
</dbReference>
<dbReference type="InterPro" id="IPR006073">
    <property type="entry name" value="GTP-bd"/>
</dbReference>
<dbReference type="InterPro" id="IPR019987">
    <property type="entry name" value="GTP-bd_ribosome_bio_YsxC"/>
</dbReference>
<dbReference type="InterPro" id="IPR027417">
    <property type="entry name" value="P-loop_NTPase"/>
</dbReference>
<dbReference type="NCBIfam" id="TIGR03598">
    <property type="entry name" value="GTPase_YsxC"/>
    <property type="match status" value="1"/>
</dbReference>
<dbReference type="PANTHER" id="PTHR11649:SF13">
    <property type="entry name" value="ENGB-TYPE G DOMAIN-CONTAINING PROTEIN"/>
    <property type="match status" value="1"/>
</dbReference>
<dbReference type="PANTHER" id="PTHR11649">
    <property type="entry name" value="MSS1/TRME-RELATED GTP-BINDING PROTEIN"/>
    <property type="match status" value="1"/>
</dbReference>
<dbReference type="Pfam" id="PF01926">
    <property type="entry name" value="MMR_HSR1"/>
    <property type="match status" value="1"/>
</dbReference>
<dbReference type="SUPFAM" id="SSF52540">
    <property type="entry name" value="P-loop containing nucleoside triphosphate hydrolases"/>
    <property type="match status" value="1"/>
</dbReference>
<dbReference type="PROSITE" id="PS51706">
    <property type="entry name" value="G_ENGB"/>
    <property type="match status" value="1"/>
</dbReference>
<protein>
    <recommendedName>
        <fullName evidence="1">Probable GTP-binding protein EngB</fullName>
    </recommendedName>
</protein>
<name>ENGB_RHIE6</name>